<reference key="1">
    <citation type="journal article" date="2006" name="J. Bacteriol.">
        <title>Comparison of the genome sequence of the poultry pathogen Bordetella avium with those of B. bronchiseptica, B. pertussis, and B. parapertussis reveals extensive diversity in surface structures associated with host interaction.</title>
        <authorList>
            <person name="Sebaihia M."/>
            <person name="Preston A."/>
            <person name="Maskell D.J."/>
            <person name="Kuzmiak H."/>
            <person name="Connell T.D."/>
            <person name="King N.D."/>
            <person name="Orndorff P.E."/>
            <person name="Miyamoto D.M."/>
            <person name="Thomson N.R."/>
            <person name="Harris D."/>
            <person name="Goble A."/>
            <person name="Lord A."/>
            <person name="Murphy L."/>
            <person name="Quail M.A."/>
            <person name="Rutter S."/>
            <person name="Squares R."/>
            <person name="Squares S."/>
            <person name="Woodward J."/>
            <person name="Parkhill J."/>
            <person name="Temple L.M."/>
        </authorList>
    </citation>
    <scope>NUCLEOTIDE SEQUENCE [LARGE SCALE GENOMIC DNA]</scope>
    <source>
        <strain>197N</strain>
    </source>
</reference>
<feature type="chain" id="PRO_0000268283" description="Bifunctional protein FolD">
    <location>
        <begin position="1"/>
        <end position="284"/>
    </location>
</feature>
<feature type="binding site" evidence="1">
    <location>
        <begin position="165"/>
        <end position="167"/>
    </location>
    <ligand>
        <name>NADP(+)</name>
        <dbReference type="ChEBI" id="CHEBI:58349"/>
    </ligand>
</feature>
<feature type="binding site" evidence="1">
    <location>
        <position position="190"/>
    </location>
    <ligand>
        <name>NADP(+)</name>
        <dbReference type="ChEBI" id="CHEBI:58349"/>
    </ligand>
</feature>
<feature type="binding site" evidence="1">
    <location>
        <position position="231"/>
    </location>
    <ligand>
        <name>NADP(+)</name>
        <dbReference type="ChEBI" id="CHEBI:58349"/>
    </ligand>
</feature>
<sequence>MTARIIDGVALSQRIREEVAERAAALTAQGVRPGLAVVLVGEDPASQVYVRNKVAACEKAGLHSVKEQYPADLSEADLLARIDALNRDPSIHGILVQLPLPAHLDSHKVIEAIAPEKDVDGFHISNAGLLMTGQPLFRPCTPYGVMKMLESEGVTLRGAEAVVVGASNIVGKPMAMLLLAAGATVTICNSKTRDLAAQTRRADVLVVATGRPRMITGDMIKPGAVVIDVGINRGDDGKLCGDVDFASAQQVAGAITPVPGGVGPMTIAMLMVNTLQAAERTLTP</sequence>
<proteinExistence type="inferred from homology"/>
<keyword id="KW-0028">Amino-acid biosynthesis</keyword>
<keyword id="KW-0368">Histidine biosynthesis</keyword>
<keyword id="KW-0378">Hydrolase</keyword>
<keyword id="KW-0486">Methionine biosynthesis</keyword>
<keyword id="KW-0511">Multifunctional enzyme</keyword>
<keyword id="KW-0521">NADP</keyword>
<keyword id="KW-0554">One-carbon metabolism</keyword>
<keyword id="KW-0560">Oxidoreductase</keyword>
<keyword id="KW-0658">Purine biosynthesis</keyword>
<keyword id="KW-1185">Reference proteome</keyword>
<organism>
    <name type="scientific">Bordetella avium (strain 197N)</name>
    <dbReference type="NCBI Taxonomy" id="360910"/>
    <lineage>
        <taxon>Bacteria</taxon>
        <taxon>Pseudomonadati</taxon>
        <taxon>Pseudomonadota</taxon>
        <taxon>Betaproteobacteria</taxon>
        <taxon>Burkholderiales</taxon>
        <taxon>Alcaligenaceae</taxon>
        <taxon>Bordetella</taxon>
    </lineage>
</organism>
<evidence type="ECO:0000255" key="1">
    <source>
        <dbReference type="HAMAP-Rule" id="MF_01576"/>
    </source>
</evidence>
<gene>
    <name evidence="1" type="primary">folD</name>
    <name type="ordered locus">BAV1660</name>
</gene>
<comment type="function">
    <text evidence="1">Catalyzes the oxidation of 5,10-methylenetetrahydrofolate to 5,10-methenyltetrahydrofolate and then the hydrolysis of 5,10-methenyltetrahydrofolate to 10-formyltetrahydrofolate.</text>
</comment>
<comment type="catalytic activity">
    <reaction evidence="1">
        <text>(6R)-5,10-methylene-5,6,7,8-tetrahydrofolate + NADP(+) = (6R)-5,10-methenyltetrahydrofolate + NADPH</text>
        <dbReference type="Rhea" id="RHEA:22812"/>
        <dbReference type="ChEBI" id="CHEBI:15636"/>
        <dbReference type="ChEBI" id="CHEBI:57455"/>
        <dbReference type="ChEBI" id="CHEBI:57783"/>
        <dbReference type="ChEBI" id="CHEBI:58349"/>
        <dbReference type="EC" id="1.5.1.5"/>
    </reaction>
</comment>
<comment type="catalytic activity">
    <reaction evidence="1">
        <text>(6R)-5,10-methenyltetrahydrofolate + H2O = (6R)-10-formyltetrahydrofolate + H(+)</text>
        <dbReference type="Rhea" id="RHEA:23700"/>
        <dbReference type="ChEBI" id="CHEBI:15377"/>
        <dbReference type="ChEBI" id="CHEBI:15378"/>
        <dbReference type="ChEBI" id="CHEBI:57455"/>
        <dbReference type="ChEBI" id="CHEBI:195366"/>
        <dbReference type="EC" id="3.5.4.9"/>
    </reaction>
</comment>
<comment type="pathway">
    <text evidence="1">One-carbon metabolism; tetrahydrofolate interconversion.</text>
</comment>
<comment type="subunit">
    <text evidence="1">Homodimer.</text>
</comment>
<comment type="similarity">
    <text evidence="1">Belongs to the tetrahydrofolate dehydrogenase/cyclohydrolase family.</text>
</comment>
<name>FOLD_BORA1</name>
<accession>Q2L1G0</accession>
<protein>
    <recommendedName>
        <fullName evidence="1">Bifunctional protein FolD</fullName>
    </recommendedName>
    <domain>
        <recommendedName>
            <fullName evidence="1">Methylenetetrahydrofolate dehydrogenase</fullName>
            <ecNumber evidence="1">1.5.1.5</ecNumber>
        </recommendedName>
    </domain>
    <domain>
        <recommendedName>
            <fullName evidence="1">Methenyltetrahydrofolate cyclohydrolase</fullName>
            <ecNumber evidence="1">3.5.4.9</ecNumber>
        </recommendedName>
    </domain>
</protein>
<dbReference type="EC" id="1.5.1.5" evidence="1"/>
<dbReference type="EC" id="3.5.4.9" evidence="1"/>
<dbReference type="EMBL" id="AM167904">
    <property type="protein sequence ID" value="CAJ49268.1"/>
    <property type="molecule type" value="Genomic_DNA"/>
</dbReference>
<dbReference type="RefSeq" id="WP_012417329.1">
    <property type="nucleotide sequence ID" value="NC_010645.1"/>
</dbReference>
<dbReference type="SMR" id="Q2L1G0"/>
<dbReference type="STRING" id="360910.BAV1660"/>
<dbReference type="KEGG" id="bav:BAV1660"/>
<dbReference type="eggNOG" id="COG0190">
    <property type="taxonomic scope" value="Bacteria"/>
</dbReference>
<dbReference type="HOGENOM" id="CLU_034045_2_1_4"/>
<dbReference type="OrthoDB" id="9803580at2"/>
<dbReference type="UniPathway" id="UPA00193"/>
<dbReference type="Proteomes" id="UP000001977">
    <property type="component" value="Chromosome"/>
</dbReference>
<dbReference type="GO" id="GO:0005829">
    <property type="term" value="C:cytosol"/>
    <property type="evidence" value="ECO:0007669"/>
    <property type="project" value="TreeGrafter"/>
</dbReference>
<dbReference type="GO" id="GO:0004477">
    <property type="term" value="F:methenyltetrahydrofolate cyclohydrolase activity"/>
    <property type="evidence" value="ECO:0007669"/>
    <property type="project" value="UniProtKB-UniRule"/>
</dbReference>
<dbReference type="GO" id="GO:0004488">
    <property type="term" value="F:methylenetetrahydrofolate dehydrogenase (NADP+) activity"/>
    <property type="evidence" value="ECO:0007669"/>
    <property type="project" value="UniProtKB-UniRule"/>
</dbReference>
<dbReference type="GO" id="GO:0000105">
    <property type="term" value="P:L-histidine biosynthetic process"/>
    <property type="evidence" value="ECO:0007669"/>
    <property type="project" value="UniProtKB-KW"/>
</dbReference>
<dbReference type="GO" id="GO:0009086">
    <property type="term" value="P:methionine biosynthetic process"/>
    <property type="evidence" value="ECO:0007669"/>
    <property type="project" value="UniProtKB-KW"/>
</dbReference>
<dbReference type="GO" id="GO:0006164">
    <property type="term" value="P:purine nucleotide biosynthetic process"/>
    <property type="evidence" value="ECO:0007669"/>
    <property type="project" value="UniProtKB-KW"/>
</dbReference>
<dbReference type="GO" id="GO:0035999">
    <property type="term" value="P:tetrahydrofolate interconversion"/>
    <property type="evidence" value="ECO:0007669"/>
    <property type="project" value="UniProtKB-UniRule"/>
</dbReference>
<dbReference type="CDD" id="cd01080">
    <property type="entry name" value="NAD_bind_m-THF_DH_Cyclohyd"/>
    <property type="match status" value="1"/>
</dbReference>
<dbReference type="FunFam" id="3.40.50.720:FF:000094">
    <property type="entry name" value="Bifunctional protein FolD"/>
    <property type="match status" value="1"/>
</dbReference>
<dbReference type="FunFam" id="3.40.50.10860:FF:000005">
    <property type="entry name" value="C-1-tetrahydrofolate synthase, cytoplasmic, putative"/>
    <property type="match status" value="1"/>
</dbReference>
<dbReference type="Gene3D" id="3.40.50.10860">
    <property type="entry name" value="Leucine Dehydrogenase, chain A, domain 1"/>
    <property type="match status" value="1"/>
</dbReference>
<dbReference type="Gene3D" id="3.40.50.720">
    <property type="entry name" value="NAD(P)-binding Rossmann-like Domain"/>
    <property type="match status" value="1"/>
</dbReference>
<dbReference type="HAMAP" id="MF_01576">
    <property type="entry name" value="THF_DHG_CYH"/>
    <property type="match status" value="1"/>
</dbReference>
<dbReference type="InterPro" id="IPR046346">
    <property type="entry name" value="Aminoacid_DH-like_N_sf"/>
</dbReference>
<dbReference type="InterPro" id="IPR036291">
    <property type="entry name" value="NAD(P)-bd_dom_sf"/>
</dbReference>
<dbReference type="InterPro" id="IPR000672">
    <property type="entry name" value="THF_DH/CycHdrlase"/>
</dbReference>
<dbReference type="InterPro" id="IPR020630">
    <property type="entry name" value="THF_DH/CycHdrlase_cat_dom"/>
</dbReference>
<dbReference type="InterPro" id="IPR020867">
    <property type="entry name" value="THF_DH/CycHdrlase_CS"/>
</dbReference>
<dbReference type="InterPro" id="IPR020631">
    <property type="entry name" value="THF_DH/CycHdrlase_NAD-bd_dom"/>
</dbReference>
<dbReference type="NCBIfam" id="NF008058">
    <property type="entry name" value="PRK10792.1"/>
    <property type="match status" value="1"/>
</dbReference>
<dbReference type="NCBIfam" id="NF010783">
    <property type="entry name" value="PRK14186.1"/>
    <property type="match status" value="1"/>
</dbReference>
<dbReference type="NCBIfam" id="NF010785">
    <property type="entry name" value="PRK14188.1"/>
    <property type="match status" value="1"/>
</dbReference>
<dbReference type="NCBIfam" id="NF010786">
    <property type="entry name" value="PRK14189.1"/>
    <property type="match status" value="1"/>
</dbReference>
<dbReference type="PANTHER" id="PTHR48099:SF5">
    <property type="entry name" value="C-1-TETRAHYDROFOLATE SYNTHASE, CYTOPLASMIC"/>
    <property type="match status" value="1"/>
</dbReference>
<dbReference type="PANTHER" id="PTHR48099">
    <property type="entry name" value="C-1-TETRAHYDROFOLATE SYNTHASE, CYTOPLASMIC-RELATED"/>
    <property type="match status" value="1"/>
</dbReference>
<dbReference type="Pfam" id="PF00763">
    <property type="entry name" value="THF_DHG_CYH"/>
    <property type="match status" value="1"/>
</dbReference>
<dbReference type="Pfam" id="PF02882">
    <property type="entry name" value="THF_DHG_CYH_C"/>
    <property type="match status" value="1"/>
</dbReference>
<dbReference type="PRINTS" id="PR00085">
    <property type="entry name" value="THFDHDRGNASE"/>
</dbReference>
<dbReference type="SUPFAM" id="SSF53223">
    <property type="entry name" value="Aminoacid dehydrogenase-like, N-terminal domain"/>
    <property type="match status" value="1"/>
</dbReference>
<dbReference type="SUPFAM" id="SSF51735">
    <property type="entry name" value="NAD(P)-binding Rossmann-fold domains"/>
    <property type="match status" value="1"/>
</dbReference>
<dbReference type="PROSITE" id="PS00766">
    <property type="entry name" value="THF_DHG_CYH_1"/>
    <property type="match status" value="1"/>
</dbReference>
<dbReference type="PROSITE" id="PS00767">
    <property type="entry name" value="THF_DHG_CYH_2"/>
    <property type="match status" value="1"/>
</dbReference>